<organism>
    <name type="scientific">Caenorhabditis briggsae</name>
    <dbReference type="NCBI Taxonomy" id="6238"/>
    <lineage>
        <taxon>Eukaryota</taxon>
        <taxon>Metazoa</taxon>
        <taxon>Ecdysozoa</taxon>
        <taxon>Nematoda</taxon>
        <taxon>Chromadorea</taxon>
        <taxon>Rhabditida</taxon>
        <taxon>Rhabditina</taxon>
        <taxon>Rhabditomorpha</taxon>
        <taxon>Rhabditoidea</taxon>
        <taxon>Rhabditidae</taxon>
        <taxon>Peloderinae</taxon>
        <taxon>Caenorhabditis</taxon>
    </lineage>
</organism>
<keyword id="KW-0067">ATP-binding</keyword>
<keyword id="KW-0418">Kinase</keyword>
<keyword id="KW-0547">Nucleotide-binding</keyword>
<keyword id="KW-0539">Nucleus</keyword>
<keyword id="KW-1185">Reference proteome</keyword>
<keyword id="KW-0698">rRNA processing</keyword>
<keyword id="KW-0808">Transferase</keyword>
<feature type="chain" id="PRO_0000403778" description="Polynucleotide 5'-hydroxyl-kinase nol-9">
    <location>
        <begin position="1"/>
        <end position="548"/>
    </location>
</feature>
<feature type="binding site" evidence="2">
    <location>
        <begin position="186"/>
        <end position="193"/>
    </location>
    <ligand>
        <name>ATP</name>
        <dbReference type="ChEBI" id="CHEBI:30616"/>
    </ligand>
</feature>
<sequence length="548" mass="61799">MNAKMTIWKSTLCNLERDFPSTDRVPFFAWATGKASINDFVLPSVSCEKGNFLKISAPQRMDLPVILKTSIDSSTAYKHSRLKFRLKEVAPKCYSDIMQMIGEKEPVVLVFNKVLDTAEATVSGVITNFLIHSSIQKQIILPPHFHISRDDFRIYPQDDEARLNTHLNRLNSLKADGVKTSILPIGHKGAGKSNLMRNLVNRCLSNGYEHVYVLDCDIGQSEFTPNGCISLTKVTSPLLDKPYGHQKKTFDNSYFYGDITVNDNNIDHYMDIFERLFNKFKLISEPGSVCIVNSMGWIVDEGAEILDGIIRVIEPDLCVEIFRDQTEARYSFKEFEKCKVVEIFANNSVGVIGLPNQKKLPAPLHRELTITGYFSSLLPRPTIASFASVPPYRLNFRNITICLPMDLLVEDCHIFSSINTQLIALCVKNPDLKTRKLNGKQDMPSLSVIDSTSPALQCIGFGIIRGVNVEERSVYVVTPVNLLKLQEPPLLVRGMRIQTPSQFFTADPYNRCPYVLNLPDKSSHASANLDGLYEPSINTTQFKRSRRF</sequence>
<proteinExistence type="inferred from homology"/>
<dbReference type="EC" id="2.7.1.-"/>
<dbReference type="EMBL" id="HE601298">
    <property type="protein sequence ID" value="CAP22867.2"/>
    <property type="molecule type" value="Genomic_DNA"/>
</dbReference>
<dbReference type="SMR" id="A8WQV9"/>
<dbReference type="FunCoup" id="A8WQV9">
    <property type="interactions" value="1969"/>
</dbReference>
<dbReference type="STRING" id="6238.A8WQV9"/>
<dbReference type="WormBase" id="CBG01769">
    <property type="protein sequence ID" value="CBP14250"/>
    <property type="gene ID" value="WBGene00024956"/>
    <property type="gene designation" value="Cbr-nol-9"/>
</dbReference>
<dbReference type="eggNOG" id="KOG2750">
    <property type="taxonomic scope" value="Eukaryota"/>
</dbReference>
<dbReference type="HOGENOM" id="CLU_555791_0_0_1"/>
<dbReference type="InParanoid" id="A8WQV9"/>
<dbReference type="OMA" id="HGQIFFL"/>
<dbReference type="Proteomes" id="UP000008549">
    <property type="component" value="Unassembled WGS sequence"/>
</dbReference>
<dbReference type="GO" id="GO:0005730">
    <property type="term" value="C:nucleolus"/>
    <property type="evidence" value="ECO:0007669"/>
    <property type="project" value="UniProtKB-SubCell"/>
</dbReference>
<dbReference type="GO" id="GO:0005634">
    <property type="term" value="C:nucleus"/>
    <property type="evidence" value="ECO:0000318"/>
    <property type="project" value="GO_Central"/>
</dbReference>
<dbReference type="GO" id="GO:0005524">
    <property type="term" value="F:ATP binding"/>
    <property type="evidence" value="ECO:0007669"/>
    <property type="project" value="UniProtKB-KW"/>
</dbReference>
<dbReference type="GO" id="GO:0051731">
    <property type="term" value="F:polynucleotide 5'-hydroxyl-kinase activity"/>
    <property type="evidence" value="ECO:0000250"/>
    <property type="project" value="UniProtKB"/>
</dbReference>
<dbReference type="GO" id="GO:0000448">
    <property type="term" value="P:cleavage in ITS2 between 5.8S rRNA and LSU-rRNA of tricistronic rRNA transcript (SSU-rRNA, 5.8S rRNA, LSU-rRNA)"/>
    <property type="evidence" value="ECO:0000318"/>
    <property type="project" value="GO_Central"/>
</dbReference>
<dbReference type="GO" id="GO:0006364">
    <property type="term" value="P:rRNA processing"/>
    <property type="evidence" value="ECO:0000250"/>
    <property type="project" value="UniProtKB"/>
</dbReference>
<dbReference type="FunFam" id="3.40.50.300:FF:003052">
    <property type="entry name" value="Polynucleotide 5'-hydroxyl-kinase nol-9"/>
    <property type="match status" value="1"/>
</dbReference>
<dbReference type="Gene3D" id="3.40.50.300">
    <property type="entry name" value="P-loop containing nucleotide triphosphate hydrolases"/>
    <property type="match status" value="1"/>
</dbReference>
<dbReference type="InterPro" id="IPR045116">
    <property type="entry name" value="Clp1/Grc3"/>
</dbReference>
<dbReference type="InterPro" id="IPR032319">
    <property type="entry name" value="CLP1_P"/>
</dbReference>
<dbReference type="InterPro" id="IPR027417">
    <property type="entry name" value="P-loop_NTPase"/>
</dbReference>
<dbReference type="PANTHER" id="PTHR12755">
    <property type="entry name" value="CLEAVAGE/POLYADENYLATION FACTOR IA SUBUNIT CLP1P"/>
    <property type="match status" value="1"/>
</dbReference>
<dbReference type="PANTHER" id="PTHR12755:SF3">
    <property type="entry name" value="POLYNUCLEOTIDE 5'-HYDROXYL-KINASE NOL9"/>
    <property type="match status" value="1"/>
</dbReference>
<dbReference type="Pfam" id="PF16575">
    <property type="entry name" value="CLP1_P"/>
    <property type="match status" value="1"/>
</dbReference>
<dbReference type="Pfam" id="PF25467">
    <property type="entry name" value="NOL9_C"/>
    <property type="match status" value="1"/>
</dbReference>
<evidence type="ECO:0000250" key="1"/>
<evidence type="ECO:0000255" key="2"/>
<evidence type="ECO:0000305" key="3"/>
<gene>
    <name type="primary">nol-9</name>
    <name type="ORF">CBG01769</name>
</gene>
<name>NOL9_CAEBR</name>
<protein>
    <recommendedName>
        <fullName>Polynucleotide 5'-hydroxyl-kinase nol-9</fullName>
        <ecNumber>2.7.1.-</ecNumber>
    </recommendedName>
    <alternativeName>
        <fullName>Nucleolar protein 9 homolog</fullName>
    </alternativeName>
</protein>
<accession>A8WQV9</accession>
<comment type="function">
    <text evidence="1">Polynucleotide 5'-kinase involved in rRNA processing.</text>
</comment>
<comment type="subcellular location">
    <subcellularLocation>
        <location evidence="1">Nucleus</location>
        <location evidence="1">Nucleolus</location>
    </subcellularLocation>
</comment>
<comment type="similarity">
    <text evidence="3">Belongs to the Clp1 family. NOL9/GRC3 subfamily.</text>
</comment>
<reference key="1">
    <citation type="journal article" date="2003" name="PLoS Biol.">
        <title>The genome sequence of Caenorhabditis briggsae: a platform for comparative genomics.</title>
        <authorList>
            <person name="Stein L.D."/>
            <person name="Bao Z."/>
            <person name="Blasiar D."/>
            <person name="Blumenthal T."/>
            <person name="Brent M.R."/>
            <person name="Chen N."/>
            <person name="Chinwalla A."/>
            <person name="Clarke L."/>
            <person name="Clee C."/>
            <person name="Coghlan A."/>
            <person name="Coulson A."/>
            <person name="D'Eustachio P."/>
            <person name="Fitch D.H.A."/>
            <person name="Fulton L.A."/>
            <person name="Fulton R.E."/>
            <person name="Griffiths-Jones S."/>
            <person name="Harris T.W."/>
            <person name="Hillier L.W."/>
            <person name="Kamath R."/>
            <person name="Kuwabara P.E."/>
            <person name="Mardis E.R."/>
            <person name="Marra M.A."/>
            <person name="Miner T.L."/>
            <person name="Minx P."/>
            <person name="Mullikin J.C."/>
            <person name="Plumb R.W."/>
            <person name="Rogers J."/>
            <person name="Schein J.E."/>
            <person name="Sohrmann M."/>
            <person name="Spieth J."/>
            <person name="Stajich J.E."/>
            <person name="Wei C."/>
            <person name="Willey D."/>
            <person name="Wilson R.K."/>
            <person name="Durbin R.M."/>
            <person name="Waterston R.H."/>
        </authorList>
    </citation>
    <scope>NUCLEOTIDE SEQUENCE [LARGE SCALE GENOMIC DNA]</scope>
    <source>
        <strain>AF16</strain>
    </source>
</reference>